<keyword id="KW-0903">Direct protein sequencing</keyword>
<keyword id="KW-0238">DNA-binding</keyword>
<keyword id="KW-0731">Sigma factor</keyword>
<keyword id="KW-0749">Sporulation</keyword>
<keyword id="KW-0804">Transcription</keyword>
<keyword id="KW-0805">Transcription regulation</keyword>
<organism>
    <name type="scientific">Bacillus thuringiensis subsp. kurstaki</name>
    <dbReference type="NCBI Taxonomy" id="29339"/>
    <lineage>
        <taxon>Bacteria</taxon>
        <taxon>Bacillati</taxon>
        <taxon>Bacillota</taxon>
        <taxon>Bacilli</taxon>
        <taxon>Bacillales</taxon>
        <taxon>Bacillaceae</taxon>
        <taxon>Bacillus</taxon>
        <taxon>Bacillus cereus group</taxon>
    </lineage>
</organism>
<comment type="function">
    <text>Sigma factors are initiation factors that promote the attachment of RNA polymerase to specific initiation sites and are then released. This sigma factor directs the transcription of crystal protein genes, a sporulation-regulated event.</text>
</comment>
<comment type="developmental stage">
    <text>Is probably activated at the time immediately preceding spore cortex formation (stage IV).</text>
</comment>
<comment type="PTM">
    <text evidence="1">Proteolytically cleaved in the N-terminus probably by a SpoIIGA homolog to yield the active peptide.</text>
</comment>
<comment type="similarity">
    <text evidence="3">Belongs to the sigma-70 factor family.</text>
</comment>
<sequence>MSLFAAIGYMVREVFVFVSYVKNNAFPQPLSSDDERKYLELMEQGDAQARNLLIEHNLRLVAHIVKKFENTGEDAEDLISIGTIGLIKAIESYSAGKGTKLATYAARCIENEILMHLRVLKKTKKDVSLHDPIGQDKEGNEISLIDILKSESEDVIDMIQLSMELEKIKEYIDILDEREKEVIVKRFGLGLDKEKTQREIAKALGISRSYVSRIEKRALMKMFHEFVRAEKEKKAKE</sequence>
<protein>
    <recommendedName>
        <fullName>RNA polymerase sigma-28 factor</fullName>
    </recommendedName>
</protein>
<accession>P62181</accession>
<accession>P26765</accession>
<dbReference type="EMBL" id="X56696">
    <property type="protein sequence ID" value="CAA40024.1"/>
    <property type="molecule type" value="Genomic_DNA"/>
</dbReference>
<dbReference type="PIR" id="A39441">
    <property type="entry name" value="A39441"/>
</dbReference>
<dbReference type="RefSeq" id="WP_000051382.1">
    <property type="nucleotide sequence ID" value="NZ_PHSM01000001.1"/>
</dbReference>
<dbReference type="SMR" id="P62181"/>
<dbReference type="GeneID" id="93006761"/>
<dbReference type="GO" id="GO:0003677">
    <property type="term" value="F:DNA binding"/>
    <property type="evidence" value="ECO:0007669"/>
    <property type="project" value="UniProtKB-KW"/>
</dbReference>
<dbReference type="GO" id="GO:0016987">
    <property type="term" value="F:sigma factor activity"/>
    <property type="evidence" value="ECO:0007669"/>
    <property type="project" value="UniProtKB-KW"/>
</dbReference>
<dbReference type="GO" id="GO:0006352">
    <property type="term" value="P:DNA-templated transcription initiation"/>
    <property type="evidence" value="ECO:0007669"/>
    <property type="project" value="InterPro"/>
</dbReference>
<dbReference type="GO" id="GO:0030435">
    <property type="term" value="P:sporulation resulting in formation of a cellular spore"/>
    <property type="evidence" value="ECO:0007669"/>
    <property type="project" value="UniProtKB-KW"/>
</dbReference>
<dbReference type="CDD" id="cd06171">
    <property type="entry name" value="Sigma70_r4"/>
    <property type="match status" value="1"/>
</dbReference>
<dbReference type="FunFam" id="1.10.10.10:FF:000197">
    <property type="entry name" value="RNA polymerase sigma factor"/>
    <property type="match status" value="1"/>
</dbReference>
<dbReference type="FunFam" id="1.20.120.1810:FF:000003">
    <property type="entry name" value="RNA polymerase sigma factor"/>
    <property type="match status" value="1"/>
</dbReference>
<dbReference type="Gene3D" id="1.20.120.1810">
    <property type="match status" value="1"/>
</dbReference>
<dbReference type="Gene3D" id="1.10.10.10">
    <property type="entry name" value="Winged helix-like DNA-binding domain superfamily/Winged helix DNA-binding domain"/>
    <property type="match status" value="1"/>
</dbReference>
<dbReference type="InterPro" id="IPR001387">
    <property type="entry name" value="Cro/C1-type_HTH"/>
</dbReference>
<dbReference type="InterPro" id="IPR014284">
    <property type="entry name" value="RNA_pol_sigma-70_dom"/>
</dbReference>
<dbReference type="InterPro" id="IPR014209">
    <property type="entry name" value="RNA_pol_sigma-K"/>
</dbReference>
<dbReference type="InterPro" id="IPR000943">
    <property type="entry name" value="RNA_pol_sigma70"/>
</dbReference>
<dbReference type="InterPro" id="IPR007627">
    <property type="entry name" value="RNA_pol_sigma70_r2"/>
</dbReference>
<dbReference type="InterPro" id="IPR007630">
    <property type="entry name" value="RNA_pol_sigma70_r4"/>
</dbReference>
<dbReference type="InterPro" id="IPR013325">
    <property type="entry name" value="RNA_pol_sigma_r2"/>
</dbReference>
<dbReference type="InterPro" id="IPR013324">
    <property type="entry name" value="RNA_pol_sigma_r3/r4-like"/>
</dbReference>
<dbReference type="InterPro" id="IPR050813">
    <property type="entry name" value="Sigma-70_Factor"/>
</dbReference>
<dbReference type="InterPro" id="IPR036388">
    <property type="entry name" value="WH-like_DNA-bd_sf"/>
</dbReference>
<dbReference type="NCBIfam" id="NF004471">
    <property type="entry name" value="PRK05803.1"/>
    <property type="match status" value="1"/>
</dbReference>
<dbReference type="NCBIfam" id="TIGR02937">
    <property type="entry name" value="sigma70-ECF"/>
    <property type="match status" value="1"/>
</dbReference>
<dbReference type="NCBIfam" id="TIGR02846">
    <property type="entry name" value="spore_sigmaK"/>
    <property type="match status" value="1"/>
</dbReference>
<dbReference type="PANTHER" id="PTHR30376:SF3">
    <property type="entry name" value="RNA POLYMERASE SIGMA FACTOR RPOH"/>
    <property type="match status" value="1"/>
</dbReference>
<dbReference type="PANTHER" id="PTHR30376">
    <property type="entry name" value="SIGMA FACTOR RPOH HEAT SHOCK RELATED"/>
    <property type="match status" value="1"/>
</dbReference>
<dbReference type="Pfam" id="PF04542">
    <property type="entry name" value="Sigma70_r2"/>
    <property type="match status" value="1"/>
</dbReference>
<dbReference type="Pfam" id="PF04545">
    <property type="entry name" value="Sigma70_r4"/>
    <property type="match status" value="1"/>
</dbReference>
<dbReference type="PIRSF" id="PIRSF000770">
    <property type="entry name" value="RNA_pol_sigma-SigE/K"/>
    <property type="match status" value="1"/>
</dbReference>
<dbReference type="PRINTS" id="PR00046">
    <property type="entry name" value="SIGMA70FCT"/>
</dbReference>
<dbReference type="SUPFAM" id="SSF88946">
    <property type="entry name" value="Sigma2 domain of RNA polymerase sigma factors"/>
    <property type="match status" value="1"/>
</dbReference>
<dbReference type="SUPFAM" id="SSF88659">
    <property type="entry name" value="Sigma3 and sigma4 domains of RNA polymerase sigma factors"/>
    <property type="match status" value="1"/>
</dbReference>
<dbReference type="PROSITE" id="PS00715">
    <property type="entry name" value="SIGMA70_1"/>
    <property type="match status" value="1"/>
</dbReference>
<dbReference type="PROSITE" id="PS00716">
    <property type="entry name" value="SIGMA70_2"/>
    <property type="match status" value="1"/>
</dbReference>
<proteinExistence type="evidence at protein level"/>
<gene>
    <name type="primary">sigK</name>
</gene>
<evidence type="ECO:0000250" key="1"/>
<evidence type="ECO:0000269" key="2">
    <source>
    </source>
</evidence>
<evidence type="ECO:0000305" key="3"/>
<reference key="1">
    <citation type="journal article" date="1991" name="J. Bacteriol.">
        <title>Molecular cloning and characterization of two genes encoding sigma factors that direct transcription from a Bacillus thuringiensis crystal protein gene promoter.</title>
        <authorList>
            <person name="Adams L.F."/>
            <person name="Brown K.L."/>
            <person name="Whiteley H.R."/>
        </authorList>
    </citation>
    <scope>NUCLEOTIDE SEQUENCE [GENOMIC DNA]</scope>
    <scope>PROTEIN SEQUENCE OF 20-37</scope>
    <source>
        <strain>HD-1</strain>
    </source>
</reference>
<reference key="2">
    <citation type="journal article" date="1990" name="J. Bacteriol.">
        <title>Isolation of the second Bacillus thuringiensis RNA polymerase that transcribes from a crystal protein gene promoter.</title>
        <authorList>
            <person name="Brown K.L."/>
            <person name="Whiteley H.R."/>
        </authorList>
    </citation>
    <scope>CHARACTERIZATION</scope>
</reference>
<feature type="propeptide" id="PRO_0000032594" evidence="2">
    <location>
        <begin position="1"/>
        <end position="19"/>
    </location>
</feature>
<feature type="chain" id="PRO_0000032595" description="RNA polymerase sigma-28 factor">
    <location>
        <begin position="20"/>
        <end position="237"/>
    </location>
</feature>
<feature type="DNA-binding region" description="H-T-H motif" evidence="1">
    <location>
        <begin position="197"/>
        <end position="206"/>
    </location>
</feature>
<feature type="short sequence motif" description="Polymerase core binding">
    <location>
        <begin position="77"/>
        <end position="90"/>
    </location>
</feature>
<name>RP28_BACTK</name>